<accession>B3NL60</accession>
<dbReference type="EMBL" id="CH954179">
    <property type="protein sequence ID" value="EDV54710.1"/>
    <property type="molecule type" value="Genomic_DNA"/>
</dbReference>
<dbReference type="SMR" id="B3NL60"/>
<dbReference type="EnsemblMetazoa" id="FBtr0141715">
    <property type="protein sequence ID" value="FBpp0140207"/>
    <property type="gene ID" value="FBgn0113839"/>
</dbReference>
<dbReference type="EnsemblMetazoa" id="XM_001974274.3">
    <property type="protein sequence ID" value="XP_001974310.1"/>
    <property type="gene ID" value="LOC6549445"/>
</dbReference>
<dbReference type="GeneID" id="6549445"/>
<dbReference type="KEGG" id="der:6549445"/>
<dbReference type="CTD" id="35169"/>
<dbReference type="eggNOG" id="ENOG502QQM8">
    <property type="taxonomic scope" value="Eukaryota"/>
</dbReference>
<dbReference type="HOGENOM" id="CLU_011214_1_0_1"/>
<dbReference type="OMA" id="DAKYRKC"/>
<dbReference type="OrthoDB" id="49395at2759"/>
<dbReference type="PhylomeDB" id="B3NL60"/>
<dbReference type="Proteomes" id="UP000008711">
    <property type="component" value="Unassembled WGS sequence"/>
</dbReference>
<dbReference type="GO" id="GO:0005813">
    <property type="term" value="C:centrosome"/>
    <property type="evidence" value="ECO:0007669"/>
    <property type="project" value="TreeGrafter"/>
</dbReference>
<dbReference type="GO" id="GO:0005768">
    <property type="term" value="C:endosome"/>
    <property type="evidence" value="ECO:0000250"/>
    <property type="project" value="UniProtKB"/>
</dbReference>
<dbReference type="GO" id="GO:0005874">
    <property type="term" value="C:microtubule"/>
    <property type="evidence" value="ECO:0007669"/>
    <property type="project" value="UniProtKB-KW"/>
</dbReference>
<dbReference type="GO" id="GO:0045202">
    <property type="term" value="C:synapse"/>
    <property type="evidence" value="ECO:0000250"/>
    <property type="project" value="UniProtKB"/>
</dbReference>
<dbReference type="GO" id="GO:0051959">
    <property type="term" value="F:dynein light intermediate chain binding"/>
    <property type="evidence" value="ECO:0007669"/>
    <property type="project" value="TreeGrafter"/>
</dbReference>
<dbReference type="GO" id="GO:0008017">
    <property type="term" value="F:microtubule binding"/>
    <property type="evidence" value="ECO:0000250"/>
    <property type="project" value="UniProtKB"/>
</dbReference>
<dbReference type="GO" id="GO:0031267">
    <property type="term" value="F:small GTPase binding"/>
    <property type="evidence" value="ECO:0007669"/>
    <property type="project" value="EnsemblMetazoa"/>
</dbReference>
<dbReference type="GO" id="GO:0031122">
    <property type="term" value="P:cytoplasmic microtubule organization"/>
    <property type="evidence" value="ECO:0007669"/>
    <property type="project" value="InterPro"/>
</dbReference>
<dbReference type="GO" id="GO:0030705">
    <property type="term" value="P:cytoskeleton-dependent intracellular transport"/>
    <property type="evidence" value="ECO:0000250"/>
    <property type="project" value="UniProtKB"/>
</dbReference>
<dbReference type="GO" id="GO:0008340">
    <property type="term" value="P:determination of adult lifespan"/>
    <property type="evidence" value="ECO:0000250"/>
    <property type="project" value="UniProtKB"/>
</dbReference>
<dbReference type="GO" id="GO:0006897">
    <property type="term" value="P:endocytosis"/>
    <property type="evidence" value="ECO:0000250"/>
    <property type="project" value="UniProtKB"/>
</dbReference>
<dbReference type="CDD" id="cd22222">
    <property type="entry name" value="HkD_Hook"/>
    <property type="match status" value="1"/>
</dbReference>
<dbReference type="FunFam" id="1.10.418.10:FF:000024">
    <property type="entry name" value="Hook homolog 3 (Drosophila)"/>
    <property type="match status" value="1"/>
</dbReference>
<dbReference type="Gene3D" id="1.10.418.10">
    <property type="entry name" value="Calponin-like domain"/>
    <property type="match status" value="1"/>
</dbReference>
<dbReference type="InterPro" id="IPR001715">
    <property type="entry name" value="CH_dom"/>
</dbReference>
<dbReference type="InterPro" id="IPR036872">
    <property type="entry name" value="CH_dom_sf"/>
</dbReference>
<dbReference type="InterPro" id="IPR008636">
    <property type="entry name" value="Hook_C"/>
</dbReference>
<dbReference type="InterPro" id="IPR043936">
    <property type="entry name" value="HOOK_N"/>
</dbReference>
<dbReference type="PANTHER" id="PTHR18947">
    <property type="entry name" value="HOOK PROTEINS"/>
    <property type="match status" value="1"/>
</dbReference>
<dbReference type="PANTHER" id="PTHR18947:SF39">
    <property type="entry name" value="PROTEIN HOOK"/>
    <property type="match status" value="1"/>
</dbReference>
<dbReference type="Pfam" id="PF05622">
    <property type="entry name" value="HOOK"/>
    <property type="match status" value="1"/>
</dbReference>
<dbReference type="Pfam" id="PF19047">
    <property type="entry name" value="HOOK_N"/>
    <property type="match status" value="1"/>
</dbReference>
<dbReference type="SUPFAM" id="SSF116907">
    <property type="entry name" value="Hook domain"/>
    <property type="match status" value="1"/>
</dbReference>
<dbReference type="PROSITE" id="PS50021">
    <property type="entry name" value="CH"/>
    <property type="match status" value="1"/>
</dbReference>
<organism>
    <name type="scientific">Drosophila erecta</name>
    <name type="common">Fruit fly</name>
    <dbReference type="NCBI Taxonomy" id="7220"/>
    <lineage>
        <taxon>Eukaryota</taxon>
        <taxon>Metazoa</taxon>
        <taxon>Ecdysozoa</taxon>
        <taxon>Arthropoda</taxon>
        <taxon>Hexapoda</taxon>
        <taxon>Insecta</taxon>
        <taxon>Pterygota</taxon>
        <taxon>Neoptera</taxon>
        <taxon>Endopterygota</taxon>
        <taxon>Diptera</taxon>
        <taxon>Brachycera</taxon>
        <taxon>Muscomorpha</taxon>
        <taxon>Ephydroidea</taxon>
        <taxon>Drosophilidae</taxon>
        <taxon>Drosophila</taxon>
        <taxon>Sophophora</taxon>
    </lineage>
</organism>
<proteinExistence type="inferred from homology"/>
<protein>
    <recommendedName>
        <fullName>Protein hook</fullName>
    </recommendedName>
</protein>
<keyword id="KW-0175">Coiled coil</keyword>
<keyword id="KW-0963">Cytoplasm</keyword>
<keyword id="KW-0206">Cytoskeleton</keyword>
<keyword id="KW-0217">Developmental protein</keyword>
<keyword id="KW-0254">Endocytosis</keyword>
<keyword id="KW-0967">Endosome</keyword>
<keyword id="KW-0493">Microtubule</keyword>
<keyword id="KW-0770">Synapse</keyword>
<name>HOOK_DROER</name>
<reference key="1">
    <citation type="journal article" date="2007" name="Nature">
        <title>Evolution of genes and genomes on the Drosophila phylogeny.</title>
        <authorList>
            <consortium name="Drosophila 12 genomes consortium"/>
        </authorList>
    </citation>
    <scope>NUCLEOTIDE SEQUENCE [LARGE SCALE GENOMIC DNA]</scope>
    <source>
        <strain>Tucson 14021-0224.01</strain>
    </source>
</reference>
<evidence type="ECO:0000250" key="1">
    <source>
        <dbReference type="UniProtKB" id="Q24185"/>
    </source>
</evidence>
<evidence type="ECO:0000255" key="2"/>
<evidence type="ECO:0000255" key="3">
    <source>
        <dbReference type="PROSITE-ProRule" id="PRU00044"/>
    </source>
</evidence>
<evidence type="ECO:0000305" key="4"/>
<feature type="chain" id="PRO_0000379063" description="Protein hook">
    <location>
        <begin position="1"/>
        <end position="679"/>
    </location>
</feature>
<feature type="domain" description="Calponin-homology (CH)" evidence="3">
    <location>
        <begin position="6"/>
        <end position="123"/>
    </location>
</feature>
<feature type="coiled-coil region" evidence="2">
    <location>
        <begin position="135"/>
        <end position="437"/>
    </location>
</feature>
<feature type="coiled-coil region" evidence="2">
    <location>
        <begin position="480"/>
        <end position="574"/>
    </location>
</feature>
<comment type="function">
    <text evidence="1">Involved in endocytic trafficking by stabilizing organelles of the endocytic pathway. Probably acts as a cytoskeletal linker protein required to tether endosome vesicles to the cytoskeleton. Involved in modulation of endocytosis at stages required for down-regulation of membrane proteins that control synapse size. Not involved in synaptic vesicle recycling. Required in R7 cells for boss endocytosis into multivesicular bodies (MVBs). Has a role in regulating adult longevity.</text>
</comment>
<comment type="subunit">
    <text evidence="1">Homodimer. Interacts with microtubules via its N-terminus.</text>
</comment>
<comment type="subcellular location">
    <subcellularLocation>
        <location evidence="1">Cytoplasm</location>
        <location evidence="1">Cytoskeleton</location>
    </subcellularLocation>
    <subcellularLocation>
        <location evidence="1">Endosome</location>
    </subcellularLocation>
    <subcellularLocation>
        <location evidence="1">Synapse</location>
    </subcellularLocation>
    <text evidence="1">Enriched at neuromuscular synapses, in both presynaptic and postsynaptic regions.</text>
</comment>
<comment type="domain">
    <text evidence="1">The coiled coil domain mediates homodimerization.</text>
</comment>
<comment type="similarity">
    <text evidence="4">Belongs to the hook family.</text>
</comment>
<sequence>MSAPKNEMYYSLLEWFKTLNLNAPHADAESLADGVALAQALNQFAPESFTDAWLSKIKASAVGSNWRLRMSNLKKVTQSVYDYYSDVLNYSLSDFSKPDLQSIAEKCDLGELERLLQLVLGCAVNCAEKQSYITEIMCLEEELQANIMRALQELEATRQASSAEGGVVSSLSRSSRTGNLDSKAVQEDRDALAQKCFETEKKMLLLIDEKTNLQQELHKLQQEFSRLEQHSTVIGDDGVSLGPVQTGSVRYNELRRQLDLLKEELLHSEGAREDLKLKAQQQDTDLLHMQMRIEELMKSSAEVTTLKDEVDVLRESNDKLKICEAQLDTYKKKLEDYNDLKKQVKILEERSADYVQQNAQFEEDAKRYANTKGQVELFKKEIQDLHAKLDAESSKNVKLEFDNKNLEGKNLALQRAKDSLLKERDNLREAVDELKCGQLSSNTALTGTTVSREMQPSATVEKLQRLEAENKALREGQGGQTALAQLLDDANKRCENLREQLKTANERILSLSHASQSDDPILKESEFGKQIKQLMELNEQKTLQLEEAVTQSTSLQCKVTQLETNLSAREQEILVYDAKYRKCVEKAKEVIKSIDPRIASALDASVLEKSSDLVEEEPKPKMSVMEEQLMTSAFYRLGVNAQRDAIDSKLAILMGSGQTFLARQRQSAPRKSLSAMKSK</sequence>
<gene>
    <name evidence="1" type="primary">hook</name>
    <name evidence="1" type="synonym">hk</name>
    <name type="ORF">GG21661</name>
</gene>